<proteinExistence type="inferred from homology"/>
<organism>
    <name type="scientific">Thermobifida fusca (strain YX)</name>
    <dbReference type="NCBI Taxonomy" id="269800"/>
    <lineage>
        <taxon>Bacteria</taxon>
        <taxon>Bacillati</taxon>
        <taxon>Actinomycetota</taxon>
        <taxon>Actinomycetes</taxon>
        <taxon>Streptosporangiales</taxon>
        <taxon>Nocardiopsidaceae</taxon>
        <taxon>Thermobifida</taxon>
    </lineage>
</organism>
<dbReference type="EC" id="2.7.4.3" evidence="1"/>
<dbReference type="EMBL" id="CP000088">
    <property type="protein sequence ID" value="AAZ56658.1"/>
    <property type="molecule type" value="Genomic_DNA"/>
</dbReference>
<dbReference type="RefSeq" id="WP_011293048.1">
    <property type="nucleotide sequence ID" value="NC_007333.1"/>
</dbReference>
<dbReference type="SMR" id="Q47LL4"/>
<dbReference type="STRING" id="269800.Tfu_2625"/>
<dbReference type="KEGG" id="tfu:Tfu_2625"/>
<dbReference type="eggNOG" id="COG0563">
    <property type="taxonomic scope" value="Bacteria"/>
</dbReference>
<dbReference type="HOGENOM" id="CLU_032354_1_2_11"/>
<dbReference type="OrthoDB" id="9805030at2"/>
<dbReference type="UniPathway" id="UPA00588">
    <property type="reaction ID" value="UER00649"/>
</dbReference>
<dbReference type="GO" id="GO:0005737">
    <property type="term" value="C:cytoplasm"/>
    <property type="evidence" value="ECO:0007669"/>
    <property type="project" value="UniProtKB-SubCell"/>
</dbReference>
<dbReference type="GO" id="GO:0004017">
    <property type="term" value="F:adenylate kinase activity"/>
    <property type="evidence" value="ECO:0007669"/>
    <property type="project" value="UniProtKB-UniRule"/>
</dbReference>
<dbReference type="GO" id="GO:0005524">
    <property type="term" value="F:ATP binding"/>
    <property type="evidence" value="ECO:0007669"/>
    <property type="project" value="UniProtKB-UniRule"/>
</dbReference>
<dbReference type="GO" id="GO:0044209">
    <property type="term" value="P:AMP salvage"/>
    <property type="evidence" value="ECO:0007669"/>
    <property type="project" value="UniProtKB-UniRule"/>
</dbReference>
<dbReference type="CDD" id="cd01428">
    <property type="entry name" value="ADK"/>
    <property type="match status" value="1"/>
</dbReference>
<dbReference type="Gene3D" id="3.40.50.300">
    <property type="entry name" value="P-loop containing nucleotide triphosphate hydrolases"/>
    <property type="match status" value="1"/>
</dbReference>
<dbReference type="HAMAP" id="MF_00235">
    <property type="entry name" value="Adenylate_kinase_Adk"/>
    <property type="match status" value="1"/>
</dbReference>
<dbReference type="InterPro" id="IPR006259">
    <property type="entry name" value="Adenyl_kin_sub"/>
</dbReference>
<dbReference type="InterPro" id="IPR000850">
    <property type="entry name" value="Adenylat/UMP-CMP_kin"/>
</dbReference>
<dbReference type="InterPro" id="IPR033690">
    <property type="entry name" value="Adenylat_kinase_CS"/>
</dbReference>
<dbReference type="InterPro" id="IPR027417">
    <property type="entry name" value="P-loop_NTPase"/>
</dbReference>
<dbReference type="NCBIfam" id="TIGR01351">
    <property type="entry name" value="adk"/>
    <property type="match status" value="1"/>
</dbReference>
<dbReference type="NCBIfam" id="NF001381">
    <property type="entry name" value="PRK00279.1-3"/>
    <property type="match status" value="1"/>
</dbReference>
<dbReference type="NCBIfam" id="NF011100">
    <property type="entry name" value="PRK14527.1"/>
    <property type="match status" value="1"/>
</dbReference>
<dbReference type="NCBIfam" id="NF011101">
    <property type="entry name" value="PRK14528.1"/>
    <property type="match status" value="1"/>
</dbReference>
<dbReference type="NCBIfam" id="NF011104">
    <property type="entry name" value="PRK14531.1"/>
    <property type="match status" value="1"/>
</dbReference>
<dbReference type="NCBIfam" id="NF011105">
    <property type="entry name" value="PRK14532.1"/>
    <property type="match status" value="1"/>
</dbReference>
<dbReference type="PANTHER" id="PTHR23359">
    <property type="entry name" value="NUCLEOTIDE KINASE"/>
    <property type="match status" value="1"/>
</dbReference>
<dbReference type="Pfam" id="PF00406">
    <property type="entry name" value="ADK"/>
    <property type="match status" value="1"/>
</dbReference>
<dbReference type="PRINTS" id="PR00094">
    <property type="entry name" value="ADENYLTKNASE"/>
</dbReference>
<dbReference type="SUPFAM" id="SSF52540">
    <property type="entry name" value="P-loop containing nucleoside triphosphate hydrolases"/>
    <property type="match status" value="1"/>
</dbReference>
<dbReference type="PROSITE" id="PS00113">
    <property type="entry name" value="ADENYLATE_KINASE"/>
    <property type="match status" value="1"/>
</dbReference>
<sequence length="189" mass="20829">MRVVLVGPPGAGKGTQAQILASKLSIPKVSTGDIFRANVSGGTELGKKAQAYMDRGDLVPDEITNAMVRDRLAEDDARAGFLLDGFPRNLAQAETLDEMLADLGVKLDVVLELVVDEEEVIRRLAERARIDNRSDDNEETIRHRLVVYREQTAPLVSFYEKRGLLEKIDAVGPIEEVTQRAMTALKSRA</sequence>
<gene>
    <name evidence="1" type="primary">adk</name>
    <name type="ordered locus">Tfu_2625</name>
</gene>
<keyword id="KW-0067">ATP-binding</keyword>
<keyword id="KW-0963">Cytoplasm</keyword>
<keyword id="KW-0418">Kinase</keyword>
<keyword id="KW-0545">Nucleotide biosynthesis</keyword>
<keyword id="KW-0547">Nucleotide-binding</keyword>
<keyword id="KW-0808">Transferase</keyword>
<name>KAD_THEFY</name>
<comment type="function">
    <text evidence="1">Catalyzes the reversible transfer of the terminal phosphate group between ATP and AMP. Plays an important role in cellular energy homeostasis and in adenine nucleotide metabolism.</text>
</comment>
<comment type="catalytic activity">
    <reaction evidence="1">
        <text>AMP + ATP = 2 ADP</text>
        <dbReference type="Rhea" id="RHEA:12973"/>
        <dbReference type="ChEBI" id="CHEBI:30616"/>
        <dbReference type="ChEBI" id="CHEBI:456215"/>
        <dbReference type="ChEBI" id="CHEBI:456216"/>
        <dbReference type="EC" id="2.7.4.3"/>
    </reaction>
</comment>
<comment type="pathway">
    <text evidence="1">Purine metabolism; AMP biosynthesis via salvage pathway; AMP from ADP: step 1/1.</text>
</comment>
<comment type="subunit">
    <text evidence="1">Monomer.</text>
</comment>
<comment type="subcellular location">
    <subcellularLocation>
        <location evidence="1">Cytoplasm</location>
    </subcellularLocation>
</comment>
<comment type="domain">
    <text evidence="1">Consists of three domains, a large central CORE domain and two small peripheral domains, NMPbind and LID, which undergo movements during catalysis. The LID domain closes over the site of phosphoryl transfer upon ATP binding. Assembling and dissambling the active center during each catalytic cycle provides an effective means to prevent ATP hydrolysis.</text>
</comment>
<comment type="similarity">
    <text evidence="1">Belongs to the adenylate kinase family.</text>
</comment>
<protein>
    <recommendedName>
        <fullName evidence="1">Adenylate kinase</fullName>
        <shortName evidence="1">AK</shortName>
        <ecNumber evidence="1">2.7.4.3</ecNumber>
    </recommendedName>
    <alternativeName>
        <fullName evidence="1">ATP-AMP transphosphorylase</fullName>
    </alternativeName>
    <alternativeName>
        <fullName evidence="1">ATP:AMP phosphotransferase</fullName>
    </alternativeName>
    <alternativeName>
        <fullName evidence="1">Adenylate monophosphate kinase</fullName>
    </alternativeName>
</protein>
<feature type="chain" id="PRO_1000058928" description="Adenylate kinase">
    <location>
        <begin position="1"/>
        <end position="189"/>
    </location>
</feature>
<feature type="region of interest" description="NMP" evidence="1">
    <location>
        <begin position="30"/>
        <end position="59"/>
    </location>
</feature>
<feature type="region of interest" description="LID" evidence="1">
    <location>
        <begin position="126"/>
        <end position="136"/>
    </location>
</feature>
<feature type="binding site" evidence="1">
    <location>
        <begin position="10"/>
        <end position="15"/>
    </location>
    <ligand>
        <name>ATP</name>
        <dbReference type="ChEBI" id="CHEBI:30616"/>
    </ligand>
</feature>
<feature type="binding site" evidence="1">
    <location>
        <position position="31"/>
    </location>
    <ligand>
        <name>AMP</name>
        <dbReference type="ChEBI" id="CHEBI:456215"/>
    </ligand>
</feature>
<feature type="binding site" evidence="1">
    <location>
        <position position="36"/>
    </location>
    <ligand>
        <name>AMP</name>
        <dbReference type="ChEBI" id="CHEBI:456215"/>
    </ligand>
</feature>
<feature type="binding site" evidence="1">
    <location>
        <begin position="57"/>
        <end position="59"/>
    </location>
    <ligand>
        <name>AMP</name>
        <dbReference type="ChEBI" id="CHEBI:456215"/>
    </ligand>
</feature>
<feature type="binding site" evidence="1">
    <location>
        <begin position="85"/>
        <end position="88"/>
    </location>
    <ligand>
        <name>AMP</name>
        <dbReference type="ChEBI" id="CHEBI:456215"/>
    </ligand>
</feature>
<feature type="binding site" evidence="1">
    <location>
        <position position="92"/>
    </location>
    <ligand>
        <name>AMP</name>
        <dbReference type="ChEBI" id="CHEBI:456215"/>
    </ligand>
</feature>
<feature type="binding site" evidence="1">
    <location>
        <position position="127"/>
    </location>
    <ligand>
        <name>ATP</name>
        <dbReference type="ChEBI" id="CHEBI:30616"/>
    </ligand>
</feature>
<feature type="binding site" evidence="1">
    <location>
        <position position="133"/>
    </location>
    <ligand>
        <name>AMP</name>
        <dbReference type="ChEBI" id="CHEBI:456215"/>
    </ligand>
</feature>
<feature type="binding site" evidence="1">
    <location>
        <position position="144"/>
    </location>
    <ligand>
        <name>AMP</name>
        <dbReference type="ChEBI" id="CHEBI:456215"/>
    </ligand>
</feature>
<feature type="binding site" evidence="1">
    <location>
        <position position="172"/>
    </location>
    <ligand>
        <name>ATP</name>
        <dbReference type="ChEBI" id="CHEBI:30616"/>
    </ligand>
</feature>
<evidence type="ECO:0000255" key="1">
    <source>
        <dbReference type="HAMAP-Rule" id="MF_00235"/>
    </source>
</evidence>
<accession>Q47LL4</accession>
<reference key="1">
    <citation type="journal article" date="2007" name="J. Bacteriol.">
        <title>Genome sequence and analysis of the soil cellulolytic actinomycete Thermobifida fusca YX.</title>
        <authorList>
            <person name="Lykidis A."/>
            <person name="Mavromatis K."/>
            <person name="Ivanova N."/>
            <person name="Anderson I."/>
            <person name="Land M."/>
            <person name="DiBartolo G."/>
            <person name="Martinez M."/>
            <person name="Lapidus A."/>
            <person name="Lucas S."/>
            <person name="Copeland A."/>
            <person name="Richardson P."/>
            <person name="Wilson D.B."/>
            <person name="Kyrpides N."/>
        </authorList>
    </citation>
    <scope>NUCLEOTIDE SEQUENCE [LARGE SCALE GENOMIC DNA]</scope>
    <source>
        <strain>YX</strain>
    </source>
</reference>